<dbReference type="EC" id="2.8.4.3" evidence="1"/>
<dbReference type="EMBL" id="CP000362">
    <property type="protein sequence ID" value="ABG33378.1"/>
    <property type="molecule type" value="Genomic_DNA"/>
</dbReference>
<dbReference type="RefSeq" id="WP_011569989.1">
    <property type="nucleotide sequence ID" value="NC_008209.1"/>
</dbReference>
<dbReference type="SMR" id="Q161G5"/>
<dbReference type="STRING" id="375451.RD1_3921"/>
<dbReference type="KEGG" id="rde:RD1_3921"/>
<dbReference type="eggNOG" id="COG0621">
    <property type="taxonomic scope" value="Bacteria"/>
</dbReference>
<dbReference type="HOGENOM" id="CLU_018697_2_0_5"/>
<dbReference type="OrthoDB" id="9805215at2"/>
<dbReference type="Proteomes" id="UP000007029">
    <property type="component" value="Chromosome"/>
</dbReference>
<dbReference type="GO" id="GO:0005829">
    <property type="term" value="C:cytosol"/>
    <property type="evidence" value="ECO:0007669"/>
    <property type="project" value="TreeGrafter"/>
</dbReference>
<dbReference type="GO" id="GO:0051539">
    <property type="term" value="F:4 iron, 4 sulfur cluster binding"/>
    <property type="evidence" value="ECO:0007669"/>
    <property type="project" value="UniProtKB-UniRule"/>
</dbReference>
<dbReference type="GO" id="GO:0046872">
    <property type="term" value="F:metal ion binding"/>
    <property type="evidence" value="ECO:0007669"/>
    <property type="project" value="UniProtKB-KW"/>
</dbReference>
<dbReference type="GO" id="GO:0035597">
    <property type="term" value="F:N6-isopentenyladenosine methylthiotransferase activity"/>
    <property type="evidence" value="ECO:0007669"/>
    <property type="project" value="TreeGrafter"/>
</dbReference>
<dbReference type="CDD" id="cd01335">
    <property type="entry name" value="Radical_SAM"/>
    <property type="match status" value="1"/>
</dbReference>
<dbReference type="FunFam" id="3.40.50.12160:FF:000001">
    <property type="entry name" value="tRNA-2-methylthio-N(6)-dimethylallyladenosine synthase"/>
    <property type="match status" value="1"/>
</dbReference>
<dbReference type="FunFam" id="3.80.30.20:FF:000001">
    <property type="entry name" value="tRNA-2-methylthio-N(6)-dimethylallyladenosine synthase 2"/>
    <property type="match status" value="1"/>
</dbReference>
<dbReference type="Gene3D" id="3.40.50.12160">
    <property type="entry name" value="Methylthiotransferase, N-terminal domain"/>
    <property type="match status" value="1"/>
</dbReference>
<dbReference type="Gene3D" id="3.80.30.20">
    <property type="entry name" value="tm_1862 like domain"/>
    <property type="match status" value="1"/>
</dbReference>
<dbReference type="HAMAP" id="MF_01864">
    <property type="entry name" value="tRNA_metthiotr_MiaB"/>
    <property type="match status" value="1"/>
</dbReference>
<dbReference type="InterPro" id="IPR006638">
    <property type="entry name" value="Elp3/MiaA/NifB-like_rSAM"/>
</dbReference>
<dbReference type="InterPro" id="IPR005839">
    <property type="entry name" value="Methylthiotransferase"/>
</dbReference>
<dbReference type="InterPro" id="IPR020612">
    <property type="entry name" value="Methylthiotransferase_CS"/>
</dbReference>
<dbReference type="InterPro" id="IPR013848">
    <property type="entry name" value="Methylthiotransferase_N"/>
</dbReference>
<dbReference type="InterPro" id="IPR038135">
    <property type="entry name" value="Methylthiotransferase_N_sf"/>
</dbReference>
<dbReference type="InterPro" id="IPR006463">
    <property type="entry name" value="MiaB_methiolase"/>
</dbReference>
<dbReference type="InterPro" id="IPR007197">
    <property type="entry name" value="rSAM"/>
</dbReference>
<dbReference type="InterPro" id="IPR023404">
    <property type="entry name" value="rSAM_horseshoe"/>
</dbReference>
<dbReference type="InterPro" id="IPR002792">
    <property type="entry name" value="TRAM_dom"/>
</dbReference>
<dbReference type="NCBIfam" id="TIGR01574">
    <property type="entry name" value="miaB-methiolase"/>
    <property type="match status" value="1"/>
</dbReference>
<dbReference type="NCBIfam" id="TIGR00089">
    <property type="entry name" value="MiaB/RimO family radical SAM methylthiotransferase"/>
    <property type="match status" value="1"/>
</dbReference>
<dbReference type="PANTHER" id="PTHR43020">
    <property type="entry name" value="CDK5 REGULATORY SUBUNIT-ASSOCIATED PROTEIN 1"/>
    <property type="match status" value="1"/>
</dbReference>
<dbReference type="PANTHER" id="PTHR43020:SF2">
    <property type="entry name" value="MITOCHONDRIAL TRNA METHYLTHIOTRANSFERASE CDK5RAP1"/>
    <property type="match status" value="1"/>
</dbReference>
<dbReference type="Pfam" id="PF04055">
    <property type="entry name" value="Radical_SAM"/>
    <property type="match status" value="1"/>
</dbReference>
<dbReference type="Pfam" id="PF01938">
    <property type="entry name" value="TRAM"/>
    <property type="match status" value="1"/>
</dbReference>
<dbReference type="Pfam" id="PF00919">
    <property type="entry name" value="UPF0004"/>
    <property type="match status" value="1"/>
</dbReference>
<dbReference type="SFLD" id="SFLDF00273">
    <property type="entry name" value="(dimethylallyl)adenosine_tRNA"/>
    <property type="match status" value="1"/>
</dbReference>
<dbReference type="SFLD" id="SFLDG01082">
    <property type="entry name" value="B12-binding_domain_containing"/>
    <property type="match status" value="1"/>
</dbReference>
<dbReference type="SFLD" id="SFLDS00029">
    <property type="entry name" value="Radical_SAM"/>
    <property type="match status" value="1"/>
</dbReference>
<dbReference type="SMART" id="SM00729">
    <property type="entry name" value="Elp3"/>
    <property type="match status" value="1"/>
</dbReference>
<dbReference type="SUPFAM" id="SSF102114">
    <property type="entry name" value="Radical SAM enzymes"/>
    <property type="match status" value="1"/>
</dbReference>
<dbReference type="PROSITE" id="PS51449">
    <property type="entry name" value="MTTASE_N"/>
    <property type="match status" value="1"/>
</dbReference>
<dbReference type="PROSITE" id="PS01278">
    <property type="entry name" value="MTTASE_RADICAL"/>
    <property type="match status" value="1"/>
</dbReference>
<dbReference type="PROSITE" id="PS51918">
    <property type="entry name" value="RADICAL_SAM"/>
    <property type="match status" value="1"/>
</dbReference>
<dbReference type="PROSITE" id="PS50926">
    <property type="entry name" value="TRAM"/>
    <property type="match status" value="1"/>
</dbReference>
<gene>
    <name evidence="1" type="primary">miaB</name>
    <name type="ordered locus">RD1_3921</name>
</gene>
<keyword id="KW-0004">4Fe-4S</keyword>
<keyword id="KW-0963">Cytoplasm</keyword>
<keyword id="KW-0408">Iron</keyword>
<keyword id="KW-0411">Iron-sulfur</keyword>
<keyword id="KW-0479">Metal-binding</keyword>
<keyword id="KW-1185">Reference proteome</keyword>
<keyword id="KW-0949">S-adenosyl-L-methionine</keyword>
<keyword id="KW-0808">Transferase</keyword>
<keyword id="KW-0819">tRNA processing</keyword>
<evidence type="ECO:0000255" key="1">
    <source>
        <dbReference type="HAMAP-Rule" id="MF_01864"/>
    </source>
</evidence>
<evidence type="ECO:0000255" key="2">
    <source>
        <dbReference type="PROSITE-ProRule" id="PRU01266"/>
    </source>
</evidence>
<reference key="1">
    <citation type="journal article" date="2007" name="J. Bacteriol.">
        <title>The complete genome sequence of Roseobacter denitrificans reveals a mixotrophic rather than photosynthetic metabolism.</title>
        <authorList>
            <person name="Swingley W.D."/>
            <person name="Sadekar S."/>
            <person name="Mastrian S.D."/>
            <person name="Matthies H.J."/>
            <person name="Hao J."/>
            <person name="Ramos H."/>
            <person name="Acharya C.R."/>
            <person name="Conrad A.L."/>
            <person name="Taylor H.L."/>
            <person name="Dejesa L.C."/>
            <person name="Shah M.K."/>
            <person name="O'Huallachain M.E."/>
            <person name="Lince M.T."/>
            <person name="Blankenship R.E."/>
            <person name="Beatty J.T."/>
            <person name="Touchman J.W."/>
        </authorList>
    </citation>
    <scope>NUCLEOTIDE SEQUENCE [LARGE SCALE GENOMIC DNA]</scope>
    <source>
        <strain>ATCC 33942 / OCh 114</strain>
    </source>
</reference>
<comment type="function">
    <text evidence="1">Catalyzes the methylthiolation of N6-(dimethylallyl)adenosine (i(6)A), leading to the formation of 2-methylthio-N6-(dimethylallyl)adenosine (ms(2)i(6)A) at position 37 in tRNAs that read codons beginning with uridine.</text>
</comment>
<comment type="catalytic activity">
    <reaction evidence="1">
        <text>N(6)-dimethylallyladenosine(37) in tRNA + (sulfur carrier)-SH + AH2 + 2 S-adenosyl-L-methionine = 2-methylsulfanyl-N(6)-dimethylallyladenosine(37) in tRNA + (sulfur carrier)-H + 5'-deoxyadenosine + L-methionine + A + S-adenosyl-L-homocysteine + 2 H(+)</text>
        <dbReference type="Rhea" id="RHEA:37067"/>
        <dbReference type="Rhea" id="RHEA-COMP:10375"/>
        <dbReference type="Rhea" id="RHEA-COMP:10376"/>
        <dbReference type="Rhea" id="RHEA-COMP:14737"/>
        <dbReference type="Rhea" id="RHEA-COMP:14739"/>
        <dbReference type="ChEBI" id="CHEBI:13193"/>
        <dbReference type="ChEBI" id="CHEBI:15378"/>
        <dbReference type="ChEBI" id="CHEBI:17319"/>
        <dbReference type="ChEBI" id="CHEBI:17499"/>
        <dbReference type="ChEBI" id="CHEBI:29917"/>
        <dbReference type="ChEBI" id="CHEBI:57844"/>
        <dbReference type="ChEBI" id="CHEBI:57856"/>
        <dbReference type="ChEBI" id="CHEBI:59789"/>
        <dbReference type="ChEBI" id="CHEBI:64428"/>
        <dbReference type="ChEBI" id="CHEBI:74415"/>
        <dbReference type="ChEBI" id="CHEBI:74417"/>
        <dbReference type="EC" id="2.8.4.3"/>
    </reaction>
</comment>
<comment type="cofactor">
    <cofactor evidence="1">
        <name>[4Fe-4S] cluster</name>
        <dbReference type="ChEBI" id="CHEBI:49883"/>
    </cofactor>
    <text evidence="1">Binds 2 [4Fe-4S] clusters. One cluster is coordinated with 3 cysteines and an exchangeable S-adenosyl-L-methionine.</text>
</comment>
<comment type="subunit">
    <text evidence="1">Monomer.</text>
</comment>
<comment type="subcellular location">
    <subcellularLocation>
        <location evidence="1">Cytoplasm</location>
    </subcellularLocation>
</comment>
<comment type="similarity">
    <text evidence="1">Belongs to the methylthiotransferase family. MiaB subfamily.</text>
</comment>
<proteinExistence type="inferred from homology"/>
<sequence>MTAPKKLFIKTYGCQMNVYDSERMSEALVAEGYVETKTAEDADMILLNTCHIREKAAEKVYSELGRLKSLKADNPDLKLGVAGCVAQAEGEEIMRRQPAVDLVVGPQSYHRLPQMEARLREGHKALDTDFPPEDKFEELKARPKARRAPSAFLTVQEGCDKFCAFCVVPYTRGAEVSRPVTRVLDEARDLVERGVREITLLGQNVNAYHGAGADGNEKTLAQLIWALNDIDGLERIRFTTSHPNDMQDDLIEAHRDCPKLMPYLHLPVQSGSDRILKRMNRKHTADSYLRLIERIRVGRPDILLSGDFIVGFPEETEADFQATLDLIEAVNYGYAYSFKYSTRPGTPAAERAQVDPVEADERLQRIQALITRQQQDIQQSMVGRDVSVLIEKPGRFEGQMVGKSEYLHAVHVDQCSAQIGDILPVRIVEAKRNSLAAVTLA</sequence>
<name>MIAB_ROSDO</name>
<protein>
    <recommendedName>
        <fullName evidence="1">tRNA-2-methylthio-N(6)-dimethylallyladenosine synthase</fullName>
        <ecNumber evidence="1">2.8.4.3</ecNumber>
    </recommendedName>
    <alternativeName>
        <fullName evidence="1">(Dimethylallyl)adenosine tRNA methylthiotransferase MiaB</fullName>
    </alternativeName>
    <alternativeName>
        <fullName evidence="1">tRNA-i(6)A37 methylthiotransferase</fullName>
    </alternativeName>
</protein>
<organism>
    <name type="scientific">Roseobacter denitrificans (strain ATCC 33942 / OCh 114)</name>
    <name type="common">Erythrobacter sp. (strain OCh 114)</name>
    <name type="synonym">Roseobacter denitrificans</name>
    <dbReference type="NCBI Taxonomy" id="375451"/>
    <lineage>
        <taxon>Bacteria</taxon>
        <taxon>Pseudomonadati</taxon>
        <taxon>Pseudomonadota</taxon>
        <taxon>Alphaproteobacteria</taxon>
        <taxon>Rhodobacterales</taxon>
        <taxon>Roseobacteraceae</taxon>
        <taxon>Roseobacter</taxon>
    </lineage>
</organism>
<feature type="chain" id="PRO_0000374512" description="tRNA-2-methylthio-N(6)-dimethylallyladenosine synthase">
    <location>
        <begin position="1"/>
        <end position="441"/>
    </location>
</feature>
<feature type="domain" description="MTTase N-terminal" evidence="1">
    <location>
        <begin position="5"/>
        <end position="121"/>
    </location>
</feature>
<feature type="domain" description="Radical SAM core" evidence="2">
    <location>
        <begin position="145"/>
        <end position="380"/>
    </location>
</feature>
<feature type="domain" description="TRAM" evidence="1">
    <location>
        <begin position="379"/>
        <end position="441"/>
    </location>
</feature>
<feature type="binding site" evidence="1">
    <location>
        <position position="14"/>
    </location>
    <ligand>
        <name>[4Fe-4S] cluster</name>
        <dbReference type="ChEBI" id="CHEBI:49883"/>
        <label>1</label>
    </ligand>
</feature>
<feature type="binding site" evidence="1">
    <location>
        <position position="50"/>
    </location>
    <ligand>
        <name>[4Fe-4S] cluster</name>
        <dbReference type="ChEBI" id="CHEBI:49883"/>
        <label>1</label>
    </ligand>
</feature>
<feature type="binding site" evidence="1">
    <location>
        <position position="84"/>
    </location>
    <ligand>
        <name>[4Fe-4S] cluster</name>
        <dbReference type="ChEBI" id="CHEBI:49883"/>
        <label>1</label>
    </ligand>
</feature>
<feature type="binding site" evidence="1">
    <location>
        <position position="159"/>
    </location>
    <ligand>
        <name>[4Fe-4S] cluster</name>
        <dbReference type="ChEBI" id="CHEBI:49883"/>
        <label>2</label>
        <note>4Fe-4S-S-AdoMet</note>
    </ligand>
</feature>
<feature type="binding site" evidence="1">
    <location>
        <position position="163"/>
    </location>
    <ligand>
        <name>[4Fe-4S] cluster</name>
        <dbReference type="ChEBI" id="CHEBI:49883"/>
        <label>2</label>
        <note>4Fe-4S-S-AdoMet</note>
    </ligand>
</feature>
<feature type="binding site" evidence="1">
    <location>
        <position position="166"/>
    </location>
    <ligand>
        <name>[4Fe-4S] cluster</name>
        <dbReference type="ChEBI" id="CHEBI:49883"/>
        <label>2</label>
        <note>4Fe-4S-S-AdoMet</note>
    </ligand>
</feature>
<accession>Q161G5</accession>